<sequence length="220" mass="23282">MKRSASDSPLLFDIPLAPDFSEEKRLLARGLKHIVGIDEAGRGPLAGPVVAAAVVLDIDNLPNGLDDSKRLTAVKREALYETILEKAITVSVASLSARSIDASDIRKAALEAMRRASVGLTLQPCHALIDGRDVPPGLPCPGSALVKGDQRSVSIAAASIVAKVTRDRMMIRAGAAHPPYGLEIHAGYATVKHRAAIETTGPVPGIHRYTFAPIKGRYSV</sequence>
<feature type="chain" id="PRO_1000031173" description="Ribonuclease HII">
    <location>
        <begin position="1"/>
        <end position="220"/>
    </location>
</feature>
<feature type="domain" description="RNase H type-2" evidence="2">
    <location>
        <begin position="32"/>
        <end position="220"/>
    </location>
</feature>
<feature type="binding site" evidence="1">
    <location>
        <position position="38"/>
    </location>
    <ligand>
        <name>a divalent metal cation</name>
        <dbReference type="ChEBI" id="CHEBI:60240"/>
    </ligand>
</feature>
<feature type="binding site" evidence="1">
    <location>
        <position position="39"/>
    </location>
    <ligand>
        <name>a divalent metal cation</name>
        <dbReference type="ChEBI" id="CHEBI:60240"/>
    </ligand>
</feature>
<feature type="binding site" evidence="1">
    <location>
        <position position="130"/>
    </location>
    <ligand>
        <name>a divalent metal cation</name>
        <dbReference type="ChEBI" id="CHEBI:60240"/>
    </ligand>
</feature>
<gene>
    <name evidence="1" type="primary">rnhB</name>
    <name type="ordered locus">Oant_0507</name>
</gene>
<evidence type="ECO:0000255" key="1">
    <source>
        <dbReference type="HAMAP-Rule" id="MF_00052"/>
    </source>
</evidence>
<evidence type="ECO:0000255" key="2">
    <source>
        <dbReference type="PROSITE-ProRule" id="PRU01319"/>
    </source>
</evidence>
<dbReference type="EC" id="3.1.26.4" evidence="1"/>
<dbReference type="EMBL" id="CP000758">
    <property type="protein sequence ID" value="ABS13238.1"/>
    <property type="molecule type" value="Genomic_DNA"/>
</dbReference>
<dbReference type="RefSeq" id="WP_012090787.1">
    <property type="nucleotide sequence ID" value="NC_009667.1"/>
</dbReference>
<dbReference type="SMR" id="A6WW84"/>
<dbReference type="STRING" id="439375.Oant_0507"/>
<dbReference type="KEGG" id="oan:Oant_0507"/>
<dbReference type="PATRIC" id="fig|439375.7.peg.541"/>
<dbReference type="eggNOG" id="COG0164">
    <property type="taxonomic scope" value="Bacteria"/>
</dbReference>
<dbReference type="HOGENOM" id="CLU_036532_3_2_5"/>
<dbReference type="Proteomes" id="UP000002301">
    <property type="component" value="Chromosome 1"/>
</dbReference>
<dbReference type="GO" id="GO:0005737">
    <property type="term" value="C:cytoplasm"/>
    <property type="evidence" value="ECO:0007669"/>
    <property type="project" value="UniProtKB-SubCell"/>
</dbReference>
<dbReference type="GO" id="GO:0032299">
    <property type="term" value="C:ribonuclease H2 complex"/>
    <property type="evidence" value="ECO:0007669"/>
    <property type="project" value="TreeGrafter"/>
</dbReference>
<dbReference type="GO" id="GO:0030145">
    <property type="term" value="F:manganese ion binding"/>
    <property type="evidence" value="ECO:0007669"/>
    <property type="project" value="UniProtKB-UniRule"/>
</dbReference>
<dbReference type="GO" id="GO:0003723">
    <property type="term" value="F:RNA binding"/>
    <property type="evidence" value="ECO:0007669"/>
    <property type="project" value="InterPro"/>
</dbReference>
<dbReference type="GO" id="GO:0004523">
    <property type="term" value="F:RNA-DNA hybrid ribonuclease activity"/>
    <property type="evidence" value="ECO:0007669"/>
    <property type="project" value="UniProtKB-UniRule"/>
</dbReference>
<dbReference type="GO" id="GO:0043137">
    <property type="term" value="P:DNA replication, removal of RNA primer"/>
    <property type="evidence" value="ECO:0007669"/>
    <property type="project" value="TreeGrafter"/>
</dbReference>
<dbReference type="GO" id="GO:0006298">
    <property type="term" value="P:mismatch repair"/>
    <property type="evidence" value="ECO:0007669"/>
    <property type="project" value="TreeGrafter"/>
</dbReference>
<dbReference type="CDD" id="cd07182">
    <property type="entry name" value="RNase_HII_bacteria_HII_like"/>
    <property type="match status" value="1"/>
</dbReference>
<dbReference type="Gene3D" id="3.30.420.10">
    <property type="entry name" value="Ribonuclease H-like superfamily/Ribonuclease H"/>
    <property type="match status" value="1"/>
</dbReference>
<dbReference type="HAMAP" id="MF_00052_B">
    <property type="entry name" value="RNase_HII_B"/>
    <property type="match status" value="1"/>
</dbReference>
<dbReference type="InterPro" id="IPR022898">
    <property type="entry name" value="RNase_HII"/>
</dbReference>
<dbReference type="InterPro" id="IPR001352">
    <property type="entry name" value="RNase_HII/HIII"/>
</dbReference>
<dbReference type="InterPro" id="IPR024567">
    <property type="entry name" value="RNase_HII/HIII_dom"/>
</dbReference>
<dbReference type="InterPro" id="IPR012337">
    <property type="entry name" value="RNaseH-like_sf"/>
</dbReference>
<dbReference type="InterPro" id="IPR036397">
    <property type="entry name" value="RNaseH_sf"/>
</dbReference>
<dbReference type="NCBIfam" id="NF000595">
    <property type="entry name" value="PRK00015.1-3"/>
    <property type="match status" value="1"/>
</dbReference>
<dbReference type="PANTHER" id="PTHR10954">
    <property type="entry name" value="RIBONUCLEASE H2 SUBUNIT A"/>
    <property type="match status" value="1"/>
</dbReference>
<dbReference type="PANTHER" id="PTHR10954:SF18">
    <property type="entry name" value="RIBONUCLEASE HII"/>
    <property type="match status" value="1"/>
</dbReference>
<dbReference type="Pfam" id="PF01351">
    <property type="entry name" value="RNase_HII"/>
    <property type="match status" value="1"/>
</dbReference>
<dbReference type="SUPFAM" id="SSF53098">
    <property type="entry name" value="Ribonuclease H-like"/>
    <property type="match status" value="1"/>
</dbReference>
<dbReference type="PROSITE" id="PS51975">
    <property type="entry name" value="RNASE_H_2"/>
    <property type="match status" value="1"/>
</dbReference>
<proteinExistence type="inferred from homology"/>
<reference key="1">
    <citation type="journal article" date="2011" name="J. Bacteriol.">
        <title>Genome of Ochrobactrum anthropi ATCC 49188 T, a versatile opportunistic pathogen and symbiont of several eukaryotic hosts.</title>
        <authorList>
            <person name="Chain P.S."/>
            <person name="Lang D.M."/>
            <person name="Comerci D.J."/>
            <person name="Malfatti S.A."/>
            <person name="Vergez L.M."/>
            <person name="Shin M."/>
            <person name="Ugalde R.A."/>
            <person name="Garcia E."/>
            <person name="Tolmasky M.E."/>
        </authorList>
    </citation>
    <scope>NUCLEOTIDE SEQUENCE [LARGE SCALE GENOMIC DNA]</scope>
    <source>
        <strain>ATCC 49188 / DSM 6882 / CCUG 24695 / JCM 21032 / LMG 3331 / NBRC 15819 / NCTC 12168 / Alc 37</strain>
    </source>
</reference>
<name>RNH2_BRUA4</name>
<keyword id="KW-0963">Cytoplasm</keyword>
<keyword id="KW-0255">Endonuclease</keyword>
<keyword id="KW-0378">Hydrolase</keyword>
<keyword id="KW-0464">Manganese</keyword>
<keyword id="KW-0479">Metal-binding</keyword>
<keyword id="KW-0540">Nuclease</keyword>
<keyword id="KW-1185">Reference proteome</keyword>
<accession>A6WW84</accession>
<protein>
    <recommendedName>
        <fullName evidence="1">Ribonuclease HII</fullName>
        <shortName evidence="1">RNase HII</shortName>
        <ecNumber evidence="1">3.1.26.4</ecNumber>
    </recommendedName>
</protein>
<organism>
    <name type="scientific">Brucella anthropi (strain ATCC 49188 / DSM 6882 / CCUG 24695 / JCM 21032 / LMG 3331 / NBRC 15819 / NCTC 12168 / Alc 37)</name>
    <name type="common">Ochrobactrum anthropi</name>
    <dbReference type="NCBI Taxonomy" id="439375"/>
    <lineage>
        <taxon>Bacteria</taxon>
        <taxon>Pseudomonadati</taxon>
        <taxon>Pseudomonadota</taxon>
        <taxon>Alphaproteobacteria</taxon>
        <taxon>Hyphomicrobiales</taxon>
        <taxon>Brucellaceae</taxon>
        <taxon>Brucella/Ochrobactrum group</taxon>
        <taxon>Brucella</taxon>
    </lineage>
</organism>
<comment type="function">
    <text evidence="1">Endonuclease that specifically degrades the RNA of RNA-DNA hybrids.</text>
</comment>
<comment type="catalytic activity">
    <reaction evidence="1">
        <text>Endonucleolytic cleavage to 5'-phosphomonoester.</text>
        <dbReference type="EC" id="3.1.26.4"/>
    </reaction>
</comment>
<comment type="cofactor">
    <cofactor evidence="1">
        <name>Mn(2+)</name>
        <dbReference type="ChEBI" id="CHEBI:29035"/>
    </cofactor>
    <cofactor evidence="1">
        <name>Mg(2+)</name>
        <dbReference type="ChEBI" id="CHEBI:18420"/>
    </cofactor>
    <text evidence="1">Manganese or magnesium. Binds 1 divalent metal ion per monomer in the absence of substrate. May bind a second metal ion after substrate binding.</text>
</comment>
<comment type="subcellular location">
    <subcellularLocation>
        <location evidence="1">Cytoplasm</location>
    </subcellularLocation>
</comment>
<comment type="similarity">
    <text evidence="1">Belongs to the RNase HII family.</text>
</comment>